<evidence type="ECO:0000250" key="1">
    <source>
        <dbReference type="UniProtKB" id="P9WII3"/>
    </source>
</evidence>
<evidence type="ECO:0000305" key="2"/>
<sequence length="114" mass="12262">MVISRAEIYWADLGPPSGSQPAKRRPVLVIQSDPYNASRLATVIAAVITSNTALAAMPGNVFLPATTTRLPRDSVVNVTAIVTLNKTDLTDRVGEVPASLMHEVDRGLRRVLDL</sequence>
<feature type="chain" id="PRO_0000201905" description="Endoribonuclease MazF2">
    <location>
        <begin position="1"/>
        <end position="114"/>
    </location>
</feature>
<organism>
    <name type="scientific">Mycobacterium bovis (strain ATCC BAA-935 / AF2122/97)</name>
    <dbReference type="NCBI Taxonomy" id="233413"/>
    <lineage>
        <taxon>Bacteria</taxon>
        <taxon>Bacillati</taxon>
        <taxon>Actinomycetota</taxon>
        <taxon>Actinomycetes</taxon>
        <taxon>Mycobacteriales</taxon>
        <taxon>Mycobacteriaceae</taxon>
        <taxon>Mycobacterium</taxon>
        <taxon>Mycobacterium tuberculosis complex</taxon>
    </lineage>
</organism>
<gene>
    <name type="primary">mazF2</name>
    <name type="ordered locus">BQ2027_MB2014C</name>
</gene>
<protein>
    <recommendedName>
        <fullName evidence="2">Endoribonuclease MazF2</fullName>
        <ecNumber evidence="2">3.1.27.-</ecNumber>
    </recommendedName>
    <alternativeName>
        <fullName>Toxin MazF2</fullName>
    </alternativeName>
    <alternativeName>
        <fullName>mRNA interferase MazF2</fullName>
    </alternativeName>
</protein>
<proteinExistence type="inferred from homology"/>
<dbReference type="EC" id="3.1.27.-" evidence="2"/>
<dbReference type="EMBL" id="LT708304">
    <property type="protein sequence ID" value="SIU00620.1"/>
    <property type="molecule type" value="Genomic_DNA"/>
</dbReference>
<dbReference type="RefSeq" id="NP_855664.1">
    <property type="nucleotide sequence ID" value="NC_002945.3"/>
</dbReference>
<dbReference type="SMR" id="P64912"/>
<dbReference type="KEGG" id="mbo:BQ2027_MB2014C"/>
<dbReference type="PATRIC" id="fig|233413.5.peg.2212"/>
<dbReference type="Proteomes" id="UP000001419">
    <property type="component" value="Chromosome"/>
</dbReference>
<dbReference type="GO" id="GO:0003677">
    <property type="term" value="F:DNA binding"/>
    <property type="evidence" value="ECO:0007669"/>
    <property type="project" value="InterPro"/>
</dbReference>
<dbReference type="GO" id="GO:0004521">
    <property type="term" value="F:RNA endonuclease activity"/>
    <property type="evidence" value="ECO:0007669"/>
    <property type="project" value="TreeGrafter"/>
</dbReference>
<dbReference type="GO" id="GO:0006402">
    <property type="term" value="P:mRNA catabolic process"/>
    <property type="evidence" value="ECO:0007669"/>
    <property type="project" value="TreeGrafter"/>
</dbReference>
<dbReference type="GO" id="GO:0016075">
    <property type="term" value="P:rRNA catabolic process"/>
    <property type="evidence" value="ECO:0007669"/>
    <property type="project" value="TreeGrafter"/>
</dbReference>
<dbReference type="FunFam" id="2.30.30.110:FF:000003">
    <property type="entry name" value="mRNA interferase"/>
    <property type="match status" value="1"/>
</dbReference>
<dbReference type="Gene3D" id="2.30.30.110">
    <property type="match status" value="1"/>
</dbReference>
<dbReference type="InterPro" id="IPR003477">
    <property type="entry name" value="PemK-like"/>
</dbReference>
<dbReference type="InterPro" id="IPR011067">
    <property type="entry name" value="Plasmid_toxin/cell-grow_inhib"/>
</dbReference>
<dbReference type="PANTHER" id="PTHR33988:SF2">
    <property type="entry name" value="ENDORIBONUCLEASE MAZF"/>
    <property type="match status" value="1"/>
</dbReference>
<dbReference type="PANTHER" id="PTHR33988">
    <property type="entry name" value="ENDORIBONUCLEASE MAZF-RELATED"/>
    <property type="match status" value="1"/>
</dbReference>
<dbReference type="Pfam" id="PF02452">
    <property type="entry name" value="PemK_toxin"/>
    <property type="match status" value="1"/>
</dbReference>
<dbReference type="PIRSF" id="PIRSF033490">
    <property type="entry name" value="MazF"/>
    <property type="match status" value="1"/>
</dbReference>
<dbReference type="SUPFAM" id="SSF50118">
    <property type="entry name" value="Cell growth inhibitor/plasmid maintenance toxic component"/>
    <property type="match status" value="1"/>
</dbReference>
<name>MAZF2_MYCBO</name>
<keyword id="KW-0255">Endonuclease</keyword>
<keyword id="KW-0378">Hydrolase</keyword>
<keyword id="KW-0540">Nuclease</keyword>
<keyword id="KW-1185">Reference proteome</keyword>
<keyword id="KW-1277">Toxin-antitoxin system</keyword>
<accession>P64912</accession>
<accession>A0A1R3XZY5</accession>
<accession>Q10867</accession>
<accession>X2BJU0</accession>
<reference key="1">
    <citation type="journal article" date="2003" name="Proc. Natl. Acad. Sci. U.S.A.">
        <title>The complete genome sequence of Mycobacterium bovis.</title>
        <authorList>
            <person name="Garnier T."/>
            <person name="Eiglmeier K."/>
            <person name="Camus J.-C."/>
            <person name="Medina N."/>
            <person name="Mansoor H."/>
            <person name="Pryor M."/>
            <person name="Duthoy S."/>
            <person name="Grondin S."/>
            <person name="Lacroix C."/>
            <person name="Monsempe C."/>
            <person name="Simon S."/>
            <person name="Harris B."/>
            <person name="Atkin R."/>
            <person name="Doggett J."/>
            <person name="Mayes R."/>
            <person name="Keating L."/>
            <person name="Wheeler P.R."/>
            <person name="Parkhill J."/>
            <person name="Barrell B.G."/>
            <person name="Cole S.T."/>
            <person name="Gordon S.V."/>
            <person name="Hewinson R.G."/>
        </authorList>
    </citation>
    <scope>NUCLEOTIDE SEQUENCE [LARGE SCALE GENOMIC DNA]</scope>
    <source>
        <strain>ATCC BAA-935 / AF2122/97</strain>
    </source>
</reference>
<reference key="2">
    <citation type="journal article" date="2017" name="Genome Announc.">
        <title>Updated reference genome sequence and annotation of Mycobacterium bovis AF2122/97.</title>
        <authorList>
            <person name="Malone K.M."/>
            <person name="Farrell D."/>
            <person name="Stuber T.P."/>
            <person name="Schubert O.T."/>
            <person name="Aebersold R."/>
            <person name="Robbe-Austerman S."/>
            <person name="Gordon S.V."/>
        </authorList>
    </citation>
    <scope>NUCLEOTIDE SEQUENCE [LARGE SCALE GENOMIC DNA]</scope>
    <scope>GENOME REANNOTATION</scope>
    <source>
        <strain>ATCC BAA-935 / AF2122/97</strain>
    </source>
</reference>
<comment type="function">
    <text evidence="1">Toxic component of a type II toxin-antitoxin (TA) system. Acts as an endoribonuclease on single-strand RNA, cleaving between the second and third bases in the sequences CUCCU and UUCCU. Neutralized by coexpression with cognate antitoxin MazE2.</text>
</comment>
<comment type="subunit">
    <text evidence="1">Probably forms a complex with cognate antitoxin MazE2.</text>
</comment>
<comment type="similarity">
    <text evidence="2">Belongs to the PemK/MazF family.</text>
</comment>